<name>SYK_SHIBS</name>
<evidence type="ECO:0000255" key="1">
    <source>
        <dbReference type="HAMAP-Rule" id="MF_00252"/>
    </source>
</evidence>
<comment type="catalytic activity">
    <reaction evidence="1">
        <text>tRNA(Lys) + L-lysine + ATP = L-lysyl-tRNA(Lys) + AMP + diphosphate</text>
        <dbReference type="Rhea" id="RHEA:20792"/>
        <dbReference type="Rhea" id="RHEA-COMP:9696"/>
        <dbReference type="Rhea" id="RHEA-COMP:9697"/>
        <dbReference type="ChEBI" id="CHEBI:30616"/>
        <dbReference type="ChEBI" id="CHEBI:32551"/>
        <dbReference type="ChEBI" id="CHEBI:33019"/>
        <dbReference type="ChEBI" id="CHEBI:78442"/>
        <dbReference type="ChEBI" id="CHEBI:78529"/>
        <dbReference type="ChEBI" id="CHEBI:456215"/>
        <dbReference type="EC" id="6.1.1.6"/>
    </reaction>
</comment>
<comment type="cofactor">
    <cofactor evidence="1">
        <name>Mg(2+)</name>
        <dbReference type="ChEBI" id="CHEBI:18420"/>
    </cofactor>
    <text evidence="1">Binds 3 Mg(2+) ions per subunit.</text>
</comment>
<comment type="subunit">
    <text evidence="1">Homodimer.</text>
</comment>
<comment type="subcellular location">
    <subcellularLocation>
        <location evidence="1">Cytoplasm</location>
    </subcellularLocation>
</comment>
<comment type="similarity">
    <text evidence="1">Belongs to the class-II aminoacyl-tRNA synthetase family.</text>
</comment>
<protein>
    <recommendedName>
        <fullName evidence="1">Lysine--tRNA ligase</fullName>
        <ecNumber evidence="1">6.1.1.6</ecNumber>
    </recommendedName>
    <alternativeName>
        <fullName evidence="1">Lysyl-tRNA synthetase</fullName>
        <shortName evidence="1">LysRS</shortName>
    </alternativeName>
</protein>
<organism>
    <name type="scientific">Shigella boydii serotype 4 (strain Sb227)</name>
    <dbReference type="NCBI Taxonomy" id="300268"/>
    <lineage>
        <taxon>Bacteria</taxon>
        <taxon>Pseudomonadati</taxon>
        <taxon>Pseudomonadota</taxon>
        <taxon>Gammaproteobacteria</taxon>
        <taxon>Enterobacterales</taxon>
        <taxon>Enterobacteriaceae</taxon>
        <taxon>Shigella</taxon>
    </lineage>
</organism>
<gene>
    <name evidence="1" type="primary">lysS</name>
    <name type="ordered locus">SBO_3102</name>
</gene>
<accession>Q31WF2</accession>
<feature type="chain" id="PRO_1000012935" description="Lysine--tRNA ligase">
    <location>
        <begin position="1"/>
        <end position="505"/>
    </location>
</feature>
<feature type="binding site" evidence="1">
    <location>
        <position position="415"/>
    </location>
    <ligand>
        <name>Mg(2+)</name>
        <dbReference type="ChEBI" id="CHEBI:18420"/>
        <label>1</label>
    </ligand>
</feature>
<feature type="binding site" evidence="1">
    <location>
        <position position="422"/>
    </location>
    <ligand>
        <name>Mg(2+)</name>
        <dbReference type="ChEBI" id="CHEBI:18420"/>
        <label>1</label>
    </ligand>
</feature>
<feature type="binding site" evidence="1">
    <location>
        <position position="422"/>
    </location>
    <ligand>
        <name>Mg(2+)</name>
        <dbReference type="ChEBI" id="CHEBI:18420"/>
        <label>2</label>
    </ligand>
</feature>
<reference key="1">
    <citation type="journal article" date="2005" name="Nucleic Acids Res.">
        <title>Genome dynamics and diversity of Shigella species, the etiologic agents of bacillary dysentery.</title>
        <authorList>
            <person name="Yang F."/>
            <person name="Yang J."/>
            <person name="Zhang X."/>
            <person name="Chen L."/>
            <person name="Jiang Y."/>
            <person name="Yan Y."/>
            <person name="Tang X."/>
            <person name="Wang J."/>
            <person name="Xiong Z."/>
            <person name="Dong J."/>
            <person name="Xue Y."/>
            <person name="Zhu Y."/>
            <person name="Xu X."/>
            <person name="Sun L."/>
            <person name="Chen S."/>
            <person name="Nie H."/>
            <person name="Peng J."/>
            <person name="Xu J."/>
            <person name="Wang Y."/>
            <person name="Yuan Z."/>
            <person name="Wen Y."/>
            <person name="Yao Z."/>
            <person name="Shen Y."/>
            <person name="Qiang B."/>
            <person name="Hou Y."/>
            <person name="Yu J."/>
            <person name="Jin Q."/>
        </authorList>
    </citation>
    <scope>NUCLEOTIDE SEQUENCE [LARGE SCALE GENOMIC DNA]</scope>
    <source>
        <strain>Sb227</strain>
    </source>
</reference>
<sequence>MSEQHAQGADAVVDLNNELKTRREKLANLREQGIVFPNDFRRDHTSDQLHAEFDGKENEELEALNIEVAVAGRMMTRRIMGKASFVTLQDVGGRIQLYVARDDLPEGVYNEQFKKWDLGDILGAKGKLFKTKTGELSIHCTELRLLTKALRPLPDKFHGLQDQEARYRQRYLDLISNDESRNTFKVRSQILSGIRQFMVNRGFMEVETPMMQVIPGGAAARPFITHHNALDLDMYLRIAPELYLKRLVVGGFERVFEINRNFRNEGISVRHNPEFTMMELYMAYADYKDLIELTESLFRTLAQDILGKTEVTYGDVTLDFGKPFEKLTMREAIKKYRPETDMADLDNFDSAKAIAESIGIHVEKSWGLGRIVTEIFEEVAEAHLIQPTFITEYPAEVSPLARRNDINPEITDRFEFFIGGREIGNGFSELNDAEDQAQRFLDQVAAKDAGDDEAMFYDEDYVTALEHGLPPTAGLGIGIDRMVMLFTNSHTIRDVILFPAMRPVK</sequence>
<dbReference type="EC" id="6.1.1.6" evidence="1"/>
<dbReference type="EMBL" id="CP000036">
    <property type="protein sequence ID" value="ABB67606.1"/>
    <property type="molecule type" value="Genomic_DNA"/>
</dbReference>
<dbReference type="RefSeq" id="WP_000003085.1">
    <property type="nucleotide sequence ID" value="NC_007613.1"/>
</dbReference>
<dbReference type="BMRB" id="Q31WF2"/>
<dbReference type="SMR" id="Q31WF2"/>
<dbReference type="KEGG" id="sbo:SBO_3102"/>
<dbReference type="HOGENOM" id="CLU_008255_6_0_6"/>
<dbReference type="Proteomes" id="UP000007067">
    <property type="component" value="Chromosome"/>
</dbReference>
<dbReference type="GO" id="GO:0005829">
    <property type="term" value="C:cytosol"/>
    <property type="evidence" value="ECO:0007669"/>
    <property type="project" value="TreeGrafter"/>
</dbReference>
<dbReference type="GO" id="GO:0005524">
    <property type="term" value="F:ATP binding"/>
    <property type="evidence" value="ECO:0007669"/>
    <property type="project" value="UniProtKB-UniRule"/>
</dbReference>
<dbReference type="GO" id="GO:0004824">
    <property type="term" value="F:lysine-tRNA ligase activity"/>
    <property type="evidence" value="ECO:0007669"/>
    <property type="project" value="UniProtKB-UniRule"/>
</dbReference>
<dbReference type="GO" id="GO:0000287">
    <property type="term" value="F:magnesium ion binding"/>
    <property type="evidence" value="ECO:0007669"/>
    <property type="project" value="UniProtKB-UniRule"/>
</dbReference>
<dbReference type="GO" id="GO:0000049">
    <property type="term" value="F:tRNA binding"/>
    <property type="evidence" value="ECO:0007669"/>
    <property type="project" value="TreeGrafter"/>
</dbReference>
<dbReference type="GO" id="GO:0006430">
    <property type="term" value="P:lysyl-tRNA aminoacylation"/>
    <property type="evidence" value="ECO:0007669"/>
    <property type="project" value="UniProtKB-UniRule"/>
</dbReference>
<dbReference type="CDD" id="cd00775">
    <property type="entry name" value="LysRS_core"/>
    <property type="match status" value="1"/>
</dbReference>
<dbReference type="CDD" id="cd04322">
    <property type="entry name" value="LysRS_N"/>
    <property type="match status" value="1"/>
</dbReference>
<dbReference type="FunFam" id="2.40.50.140:FF:000024">
    <property type="entry name" value="Lysine--tRNA ligase"/>
    <property type="match status" value="1"/>
</dbReference>
<dbReference type="FunFam" id="3.30.930.10:FF:000001">
    <property type="entry name" value="Lysine--tRNA ligase"/>
    <property type="match status" value="1"/>
</dbReference>
<dbReference type="Gene3D" id="3.30.930.10">
    <property type="entry name" value="Bira Bifunctional Protein, Domain 2"/>
    <property type="match status" value="1"/>
</dbReference>
<dbReference type="Gene3D" id="2.40.50.140">
    <property type="entry name" value="Nucleic acid-binding proteins"/>
    <property type="match status" value="1"/>
</dbReference>
<dbReference type="HAMAP" id="MF_00252">
    <property type="entry name" value="Lys_tRNA_synth_class2"/>
    <property type="match status" value="1"/>
</dbReference>
<dbReference type="InterPro" id="IPR004364">
    <property type="entry name" value="Aa-tRNA-synt_II"/>
</dbReference>
<dbReference type="InterPro" id="IPR006195">
    <property type="entry name" value="aa-tRNA-synth_II"/>
</dbReference>
<dbReference type="InterPro" id="IPR045864">
    <property type="entry name" value="aa-tRNA-synth_II/BPL/LPL"/>
</dbReference>
<dbReference type="InterPro" id="IPR002313">
    <property type="entry name" value="Lys-tRNA-ligase_II"/>
</dbReference>
<dbReference type="InterPro" id="IPR034762">
    <property type="entry name" value="Lys-tRNA-ligase_II_bac/euk"/>
</dbReference>
<dbReference type="InterPro" id="IPR044136">
    <property type="entry name" value="Lys-tRNA-ligase_II_N"/>
</dbReference>
<dbReference type="InterPro" id="IPR018149">
    <property type="entry name" value="Lys-tRNA-synth_II_C"/>
</dbReference>
<dbReference type="InterPro" id="IPR012340">
    <property type="entry name" value="NA-bd_OB-fold"/>
</dbReference>
<dbReference type="InterPro" id="IPR004365">
    <property type="entry name" value="NA-bd_OB_tRNA"/>
</dbReference>
<dbReference type="NCBIfam" id="TIGR00499">
    <property type="entry name" value="lysS_bact"/>
    <property type="match status" value="1"/>
</dbReference>
<dbReference type="NCBIfam" id="NF001756">
    <property type="entry name" value="PRK00484.1"/>
    <property type="match status" value="1"/>
</dbReference>
<dbReference type="NCBIfam" id="NF009101">
    <property type="entry name" value="PRK12445.1"/>
    <property type="match status" value="1"/>
</dbReference>
<dbReference type="PANTHER" id="PTHR42918:SF15">
    <property type="entry name" value="LYSINE--TRNA LIGASE, CHLOROPLASTIC_MITOCHONDRIAL"/>
    <property type="match status" value="1"/>
</dbReference>
<dbReference type="PANTHER" id="PTHR42918">
    <property type="entry name" value="LYSYL-TRNA SYNTHETASE"/>
    <property type="match status" value="1"/>
</dbReference>
<dbReference type="Pfam" id="PF00152">
    <property type="entry name" value="tRNA-synt_2"/>
    <property type="match status" value="1"/>
</dbReference>
<dbReference type="Pfam" id="PF01336">
    <property type="entry name" value="tRNA_anti-codon"/>
    <property type="match status" value="1"/>
</dbReference>
<dbReference type="PIRSF" id="PIRSF039101">
    <property type="entry name" value="LysRS2"/>
    <property type="match status" value="1"/>
</dbReference>
<dbReference type="PRINTS" id="PR00982">
    <property type="entry name" value="TRNASYNTHLYS"/>
</dbReference>
<dbReference type="SUPFAM" id="SSF55681">
    <property type="entry name" value="Class II aaRS and biotin synthetases"/>
    <property type="match status" value="1"/>
</dbReference>
<dbReference type="SUPFAM" id="SSF50249">
    <property type="entry name" value="Nucleic acid-binding proteins"/>
    <property type="match status" value="1"/>
</dbReference>
<dbReference type="PROSITE" id="PS50862">
    <property type="entry name" value="AA_TRNA_LIGASE_II"/>
    <property type="match status" value="1"/>
</dbReference>
<proteinExistence type="inferred from homology"/>
<keyword id="KW-0030">Aminoacyl-tRNA synthetase</keyword>
<keyword id="KW-0067">ATP-binding</keyword>
<keyword id="KW-0963">Cytoplasm</keyword>
<keyword id="KW-0436">Ligase</keyword>
<keyword id="KW-0460">Magnesium</keyword>
<keyword id="KW-0479">Metal-binding</keyword>
<keyword id="KW-0547">Nucleotide-binding</keyword>
<keyword id="KW-0648">Protein biosynthesis</keyword>